<sequence length="455" mass="49685">MSFIPHKLEQIKKMLDTIGASSVDQLFDEIPRHLRADTLKIKDGINEIQLANLMRKRANKNHHNINYIGAGAYSHHIPAAIWDIVARGEFYTAYTPYQAEASQGGLQVIYEFQTMMAGLTGMDASNASMYDGATALAESVLMAIRSNKKAKSQKVLIAEALHPTYLRVLETITKHQGIEFDIVNLDSKNGKTDVTKLEDFANTNYAAVVIQSPNFLGQLADVDGITNWAHKHGALVVAVTNPMSLAILKSPAEWGDNGADIVCGEGQPMGVPLASGGPYFGFMTCKMAHVRQMPGRIVGRTVDLDGNEGFCLTLQAREQHIRRAKATSNICTNQGLMVTAATIYMSLLGAEGLERVASISHENTQTLATELAKINGVSIRFNSAFFNEVVIDLPVNAETFVTEMEKEAIDAGYFLGEYHSDLANSIMVCATEIHTSEDIKEYIEATKKVLARIGG</sequence>
<feature type="chain" id="PRO_1000132480" description="Probable glycine dehydrogenase (decarboxylating) subunit 1">
    <location>
        <begin position="1"/>
        <end position="455"/>
    </location>
</feature>
<gene>
    <name evidence="1" type="primary">gcvPA</name>
    <name type="ordered locus">FTM_0565</name>
</gene>
<protein>
    <recommendedName>
        <fullName evidence="1">Probable glycine dehydrogenase (decarboxylating) subunit 1</fullName>
        <ecNumber evidence="1">1.4.4.2</ecNumber>
    </recommendedName>
    <alternativeName>
        <fullName evidence="1">Glycine cleavage system P-protein subunit 1</fullName>
    </alternativeName>
    <alternativeName>
        <fullName evidence="1">Glycine decarboxylase subunit 1</fullName>
    </alternativeName>
    <alternativeName>
        <fullName evidence="1">Glycine dehydrogenase (aminomethyl-transferring) subunit 1</fullName>
    </alternativeName>
</protein>
<dbReference type="EC" id="1.4.4.2" evidence="1"/>
<dbReference type="EMBL" id="CP000915">
    <property type="protein sequence ID" value="ACD30566.1"/>
    <property type="molecule type" value="Genomic_DNA"/>
</dbReference>
<dbReference type="SMR" id="B2SFM3"/>
<dbReference type="KEGG" id="ftm:FTM_0565"/>
<dbReference type="HOGENOM" id="CLU_004620_0_2_6"/>
<dbReference type="GO" id="GO:0004375">
    <property type="term" value="F:glycine dehydrogenase (decarboxylating) activity"/>
    <property type="evidence" value="ECO:0007669"/>
    <property type="project" value="UniProtKB-EC"/>
</dbReference>
<dbReference type="GO" id="GO:0019464">
    <property type="term" value="P:glycine decarboxylation via glycine cleavage system"/>
    <property type="evidence" value="ECO:0007669"/>
    <property type="project" value="UniProtKB-UniRule"/>
</dbReference>
<dbReference type="GO" id="GO:0009116">
    <property type="term" value="P:nucleoside metabolic process"/>
    <property type="evidence" value="ECO:0007669"/>
    <property type="project" value="InterPro"/>
</dbReference>
<dbReference type="CDD" id="cd00613">
    <property type="entry name" value="GDC-P"/>
    <property type="match status" value="1"/>
</dbReference>
<dbReference type="Gene3D" id="3.90.1150.10">
    <property type="entry name" value="Aspartate Aminotransferase, domain 1"/>
    <property type="match status" value="1"/>
</dbReference>
<dbReference type="Gene3D" id="3.40.640.10">
    <property type="entry name" value="Type I PLP-dependent aspartate aminotransferase-like (Major domain)"/>
    <property type="match status" value="1"/>
</dbReference>
<dbReference type="HAMAP" id="MF_00712">
    <property type="entry name" value="GcvPA"/>
    <property type="match status" value="1"/>
</dbReference>
<dbReference type="InterPro" id="IPR023010">
    <property type="entry name" value="GcvPA"/>
</dbReference>
<dbReference type="InterPro" id="IPR049315">
    <property type="entry name" value="GDC-P_N"/>
</dbReference>
<dbReference type="InterPro" id="IPR020581">
    <property type="entry name" value="GDC_P"/>
</dbReference>
<dbReference type="InterPro" id="IPR015424">
    <property type="entry name" value="PyrdxlP-dep_Trfase"/>
</dbReference>
<dbReference type="InterPro" id="IPR015421">
    <property type="entry name" value="PyrdxlP-dep_Trfase_major"/>
</dbReference>
<dbReference type="InterPro" id="IPR015422">
    <property type="entry name" value="PyrdxlP-dep_Trfase_small"/>
</dbReference>
<dbReference type="NCBIfam" id="NF001696">
    <property type="entry name" value="PRK00451.1"/>
    <property type="match status" value="1"/>
</dbReference>
<dbReference type="PANTHER" id="PTHR42806">
    <property type="entry name" value="GLYCINE CLEAVAGE SYSTEM P-PROTEIN"/>
    <property type="match status" value="1"/>
</dbReference>
<dbReference type="PANTHER" id="PTHR42806:SF1">
    <property type="entry name" value="GLYCINE DEHYDROGENASE (DECARBOXYLATING)"/>
    <property type="match status" value="1"/>
</dbReference>
<dbReference type="Pfam" id="PF02347">
    <property type="entry name" value="GDC-P"/>
    <property type="match status" value="1"/>
</dbReference>
<dbReference type="PIRSF" id="PIRSF006815">
    <property type="entry name" value="GcvPA"/>
    <property type="match status" value="1"/>
</dbReference>
<dbReference type="SUPFAM" id="SSF53383">
    <property type="entry name" value="PLP-dependent transferases"/>
    <property type="match status" value="1"/>
</dbReference>
<organism>
    <name type="scientific">Francisella tularensis subsp. mediasiatica (strain FSC147)</name>
    <dbReference type="NCBI Taxonomy" id="441952"/>
    <lineage>
        <taxon>Bacteria</taxon>
        <taxon>Pseudomonadati</taxon>
        <taxon>Pseudomonadota</taxon>
        <taxon>Gammaproteobacteria</taxon>
        <taxon>Thiotrichales</taxon>
        <taxon>Francisellaceae</taxon>
        <taxon>Francisella</taxon>
    </lineage>
</organism>
<proteinExistence type="inferred from homology"/>
<name>GCSPA_FRATM</name>
<reference key="1">
    <citation type="journal article" date="2009" name="PLoS Pathog.">
        <title>Molecular evolutionary consequences of niche restriction in Francisella tularensis, a facultative intracellular pathogen.</title>
        <authorList>
            <person name="Larsson P."/>
            <person name="Elfsmark D."/>
            <person name="Svensson K."/>
            <person name="Wikstroem P."/>
            <person name="Forsman M."/>
            <person name="Brettin T."/>
            <person name="Keim P."/>
            <person name="Johansson A."/>
        </authorList>
    </citation>
    <scope>NUCLEOTIDE SEQUENCE [LARGE SCALE GENOMIC DNA]</scope>
    <source>
        <strain>FSC147</strain>
    </source>
</reference>
<comment type="function">
    <text evidence="1">The glycine cleavage system catalyzes the degradation of glycine. The P protein binds the alpha-amino group of glycine through its pyridoxal phosphate cofactor; CO(2) is released and the remaining methylamine moiety is then transferred to the lipoamide cofactor of the H protein.</text>
</comment>
<comment type="catalytic activity">
    <reaction evidence="1">
        <text>N(6)-[(R)-lipoyl]-L-lysyl-[glycine-cleavage complex H protein] + glycine + H(+) = N(6)-[(R)-S(8)-aminomethyldihydrolipoyl]-L-lysyl-[glycine-cleavage complex H protein] + CO2</text>
        <dbReference type="Rhea" id="RHEA:24304"/>
        <dbReference type="Rhea" id="RHEA-COMP:10494"/>
        <dbReference type="Rhea" id="RHEA-COMP:10495"/>
        <dbReference type="ChEBI" id="CHEBI:15378"/>
        <dbReference type="ChEBI" id="CHEBI:16526"/>
        <dbReference type="ChEBI" id="CHEBI:57305"/>
        <dbReference type="ChEBI" id="CHEBI:83099"/>
        <dbReference type="ChEBI" id="CHEBI:83143"/>
        <dbReference type="EC" id="1.4.4.2"/>
    </reaction>
</comment>
<comment type="subunit">
    <text evidence="1">The glycine cleavage system is composed of four proteins: P, T, L and H. In this organism, the P 'protein' is a heterodimer of two subunits.</text>
</comment>
<comment type="similarity">
    <text evidence="1">Belongs to the GcvP family. N-terminal subunit subfamily.</text>
</comment>
<accession>B2SFM3</accession>
<keyword id="KW-0560">Oxidoreductase</keyword>
<evidence type="ECO:0000255" key="1">
    <source>
        <dbReference type="HAMAP-Rule" id="MF_00712"/>
    </source>
</evidence>